<organism>
    <name type="scientific">Yersinia pseudotuberculosis serotype I (strain IP32953)</name>
    <dbReference type="NCBI Taxonomy" id="273123"/>
    <lineage>
        <taxon>Bacteria</taxon>
        <taxon>Pseudomonadati</taxon>
        <taxon>Pseudomonadota</taxon>
        <taxon>Gammaproteobacteria</taxon>
        <taxon>Enterobacterales</taxon>
        <taxon>Yersiniaceae</taxon>
        <taxon>Yersinia</taxon>
    </lineage>
</organism>
<evidence type="ECO:0000255" key="1">
    <source>
        <dbReference type="HAMAP-Rule" id="MF_01343"/>
    </source>
</evidence>
<evidence type="ECO:0000305" key="2"/>
<proteinExistence type="inferred from homology"/>
<protein>
    <recommendedName>
        <fullName evidence="1">Small ribosomal subunit protein uS15</fullName>
    </recommendedName>
    <alternativeName>
        <fullName evidence="2">30S ribosomal protein S15</fullName>
    </alternativeName>
</protein>
<gene>
    <name evidence="1" type="primary">rpsO</name>
    <name type="ordered locus">YPTB0483</name>
</gene>
<dbReference type="EMBL" id="BX936398">
    <property type="protein sequence ID" value="CAH19723.1"/>
    <property type="molecule type" value="Genomic_DNA"/>
</dbReference>
<dbReference type="RefSeq" id="WP_002209257.1">
    <property type="nucleotide sequence ID" value="NZ_CP009712.1"/>
</dbReference>
<dbReference type="SMR" id="Q66F57"/>
<dbReference type="GeneID" id="96663990"/>
<dbReference type="KEGG" id="ypo:BZ17_2080"/>
<dbReference type="KEGG" id="yps:YPTB0483"/>
<dbReference type="PATRIC" id="fig|273123.14.peg.2208"/>
<dbReference type="Proteomes" id="UP000001011">
    <property type="component" value="Chromosome"/>
</dbReference>
<dbReference type="GO" id="GO:0022627">
    <property type="term" value="C:cytosolic small ribosomal subunit"/>
    <property type="evidence" value="ECO:0007669"/>
    <property type="project" value="TreeGrafter"/>
</dbReference>
<dbReference type="GO" id="GO:0019843">
    <property type="term" value="F:rRNA binding"/>
    <property type="evidence" value="ECO:0007669"/>
    <property type="project" value="UniProtKB-UniRule"/>
</dbReference>
<dbReference type="GO" id="GO:0003735">
    <property type="term" value="F:structural constituent of ribosome"/>
    <property type="evidence" value="ECO:0007669"/>
    <property type="project" value="InterPro"/>
</dbReference>
<dbReference type="GO" id="GO:0006412">
    <property type="term" value="P:translation"/>
    <property type="evidence" value="ECO:0007669"/>
    <property type="project" value="UniProtKB-UniRule"/>
</dbReference>
<dbReference type="CDD" id="cd00353">
    <property type="entry name" value="Ribosomal_S15p_S13e"/>
    <property type="match status" value="1"/>
</dbReference>
<dbReference type="FunFam" id="1.10.287.10:FF:000002">
    <property type="entry name" value="30S ribosomal protein S15"/>
    <property type="match status" value="1"/>
</dbReference>
<dbReference type="Gene3D" id="6.10.250.3130">
    <property type="match status" value="1"/>
</dbReference>
<dbReference type="Gene3D" id="1.10.287.10">
    <property type="entry name" value="S15/NS1, RNA-binding"/>
    <property type="match status" value="1"/>
</dbReference>
<dbReference type="HAMAP" id="MF_01343_B">
    <property type="entry name" value="Ribosomal_uS15_B"/>
    <property type="match status" value="1"/>
</dbReference>
<dbReference type="InterPro" id="IPR000589">
    <property type="entry name" value="Ribosomal_uS15"/>
</dbReference>
<dbReference type="InterPro" id="IPR005290">
    <property type="entry name" value="Ribosomal_uS15_bac-type"/>
</dbReference>
<dbReference type="InterPro" id="IPR009068">
    <property type="entry name" value="uS15_NS1_RNA-bd_sf"/>
</dbReference>
<dbReference type="NCBIfam" id="TIGR00952">
    <property type="entry name" value="S15_bact"/>
    <property type="match status" value="1"/>
</dbReference>
<dbReference type="PANTHER" id="PTHR23321">
    <property type="entry name" value="RIBOSOMAL PROTEIN S15, BACTERIAL AND ORGANELLAR"/>
    <property type="match status" value="1"/>
</dbReference>
<dbReference type="PANTHER" id="PTHR23321:SF26">
    <property type="entry name" value="SMALL RIBOSOMAL SUBUNIT PROTEIN US15M"/>
    <property type="match status" value="1"/>
</dbReference>
<dbReference type="Pfam" id="PF00312">
    <property type="entry name" value="Ribosomal_S15"/>
    <property type="match status" value="1"/>
</dbReference>
<dbReference type="SMART" id="SM01387">
    <property type="entry name" value="Ribosomal_S15"/>
    <property type="match status" value="1"/>
</dbReference>
<dbReference type="SUPFAM" id="SSF47060">
    <property type="entry name" value="S15/NS1 RNA-binding domain"/>
    <property type="match status" value="1"/>
</dbReference>
<dbReference type="PROSITE" id="PS00362">
    <property type="entry name" value="RIBOSOMAL_S15"/>
    <property type="match status" value="1"/>
</dbReference>
<reference key="1">
    <citation type="journal article" date="2004" name="Proc. Natl. Acad. Sci. U.S.A.">
        <title>Insights into the evolution of Yersinia pestis through whole-genome comparison with Yersinia pseudotuberculosis.</title>
        <authorList>
            <person name="Chain P.S.G."/>
            <person name="Carniel E."/>
            <person name="Larimer F.W."/>
            <person name="Lamerdin J."/>
            <person name="Stoutland P.O."/>
            <person name="Regala W.M."/>
            <person name="Georgescu A.M."/>
            <person name="Vergez L.M."/>
            <person name="Land M.L."/>
            <person name="Motin V.L."/>
            <person name="Brubaker R.R."/>
            <person name="Fowler J."/>
            <person name="Hinnebusch J."/>
            <person name="Marceau M."/>
            <person name="Medigue C."/>
            <person name="Simonet M."/>
            <person name="Chenal-Francisque V."/>
            <person name="Souza B."/>
            <person name="Dacheux D."/>
            <person name="Elliott J.M."/>
            <person name="Derbise A."/>
            <person name="Hauser L.J."/>
            <person name="Garcia E."/>
        </authorList>
    </citation>
    <scope>NUCLEOTIDE SEQUENCE [LARGE SCALE GENOMIC DNA]</scope>
    <source>
        <strain>IP32953</strain>
    </source>
</reference>
<sequence>MSLSVEAKAKIVADFGRGTNDTGSSEVQVALLTAQINHLQGHFSEHKKDHHSRRGLLRMVSTRRKLLDYLKRQDVARYASLIERLGLRR</sequence>
<keyword id="KW-0687">Ribonucleoprotein</keyword>
<keyword id="KW-0689">Ribosomal protein</keyword>
<keyword id="KW-0694">RNA-binding</keyword>
<keyword id="KW-0699">rRNA-binding</keyword>
<comment type="function">
    <text evidence="1">One of the primary rRNA binding proteins, it binds directly to 16S rRNA where it helps nucleate assembly of the platform of the 30S subunit by binding and bridging several RNA helices of the 16S rRNA.</text>
</comment>
<comment type="function">
    <text evidence="1">Forms an intersubunit bridge (bridge B4) with the 23S rRNA of the 50S subunit in the ribosome.</text>
</comment>
<comment type="subunit">
    <text evidence="1">Part of the 30S ribosomal subunit. Forms a bridge to the 50S subunit in the 70S ribosome, contacting the 23S rRNA.</text>
</comment>
<comment type="similarity">
    <text evidence="1">Belongs to the universal ribosomal protein uS15 family.</text>
</comment>
<accession>Q66F57</accession>
<feature type="chain" id="PRO_0000115599" description="Small ribosomal subunit protein uS15">
    <location>
        <begin position="1"/>
        <end position="89"/>
    </location>
</feature>
<name>RS15_YERPS</name>